<organism>
    <name type="scientific">Trypanosoma cruzi</name>
    <dbReference type="NCBI Taxonomy" id="5693"/>
    <lineage>
        <taxon>Eukaryota</taxon>
        <taxon>Discoba</taxon>
        <taxon>Euglenozoa</taxon>
        <taxon>Kinetoplastea</taxon>
        <taxon>Metakinetoplastina</taxon>
        <taxon>Trypanosomatida</taxon>
        <taxon>Trypanosomatidae</taxon>
        <taxon>Trypanosoma</taxon>
        <taxon>Schizotrypanum</taxon>
    </lineage>
</organism>
<protein>
    <recommendedName>
        <fullName>Heat shock 70 kDa protein, mitochondrial</fullName>
    </recommendedName>
</protein>
<proteinExistence type="inferred from homology"/>
<reference key="1">
    <citation type="journal article" date="1989" name="Mol. Cell. Biol.">
        <title>Molecular cloning of mtp70, a mitochondrial member of the hsp70 family.</title>
        <authorList>
            <person name="Engman D.M."/>
            <person name="Kirchhoff L.V."/>
            <person name="Donelson J.E."/>
        </authorList>
    </citation>
    <scope>NUCLEOTIDE SEQUENCE [GENOMIC DNA]</scope>
</reference>
<reference key="2">
    <citation type="journal article" date="1992" name="Mol. Biochem. Parasitol.">
        <title>Specific functional domains of mitochondrial hsp70s suggested by sequence comparison of the trypanosome and yeast proteins.</title>
        <authorList>
            <person name="Engman D.M."/>
            <person name="Fehr S.C."/>
            <person name="Donelson J.E."/>
        </authorList>
    </citation>
    <scope>NUCLEOTIDE SEQUENCE [GENOMIC DNA]</scope>
</reference>
<dbReference type="EMBL" id="M73627">
    <property type="protein sequence ID" value="AAA30215.1"/>
    <property type="molecule type" value="Genomic_DNA"/>
</dbReference>
<dbReference type="PIR" id="A33483">
    <property type="entry name" value="A33483"/>
</dbReference>
<dbReference type="SMR" id="P20583"/>
<dbReference type="VEuPathDB" id="TriTrypDB:BCY84_03874"/>
<dbReference type="VEuPathDB" id="TriTrypDB:C3747_28g91"/>
<dbReference type="VEuPathDB" id="TriTrypDB:C4B63_18g293"/>
<dbReference type="VEuPathDB" id="TriTrypDB:ECC02_000076"/>
<dbReference type="VEuPathDB" id="TriTrypDB:Tc_MARK_1997"/>
<dbReference type="VEuPathDB" id="TriTrypDB:TcBrA4_0078960"/>
<dbReference type="VEuPathDB" id="TriTrypDB:TcCL_NonESM02906"/>
<dbReference type="VEuPathDB" id="TriTrypDB:TcCLB.507029.30"/>
<dbReference type="VEuPathDB" id="TriTrypDB:TcCLB.511211.170"/>
<dbReference type="VEuPathDB" id="TriTrypDB:TCDM_08367"/>
<dbReference type="VEuPathDB" id="TriTrypDB:TcG_13099"/>
<dbReference type="VEuPathDB" id="TriTrypDB:TCSYLVIO_003281"/>
<dbReference type="VEuPathDB" id="TriTrypDB:TcYC6_0097560"/>
<dbReference type="GO" id="GO:0020023">
    <property type="term" value="C:kinetoplast"/>
    <property type="evidence" value="ECO:0007669"/>
    <property type="project" value="UniProtKB-SubCell"/>
</dbReference>
<dbReference type="GO" id="GO:0005524">
    <property type="term" value="F:ATP binding"/>
    <property type="evidence" value="ECO:0007669"/>
    <property type="project" value="UniProtKB-KW"/>
</dbReference>
<dbReference type="GO" id="GO:0140662">
    <property type="term" value="F:ATP-dependent protein folding chaperone"/>
    <property type="evidence" value="ECO:0007669"/>
    <property type="project" value="InterPro"/>
</dbReference>
<dbReference type="GO" id="GO:0051082">
    <property type="term" value="F:unfolded protein binding"/>
    <property type="evidence" value="ECO:0007669"/>
    <property type="project" value="InterPro"/>
</dbReference>
<dbReference type="GO" id="GO:0006260">
    <property type="term" value="P:DNA replication"/>
    <property type="evidence" value="ECO:0007669"/>
    <property type="project" value="UniProtKB-KW"/>
</dbReference>
<dbReference type="FunFam" id="2.60.34.10:FF:000014">
    <property type="entry name" value="Chaperone protein DnaK HSP70"/>
    <property type="match status" value="1"/>
</dbReference>
<dbReference type="FunFam" id="3.30.420.40:FF:000020">
    <property type="entry name" value="Chaperone protein HscA homolog"/>
    <property type="match status" value="1"/>
</dbReference>
<dbReference type="FunFam" id="1.20.1270.10:FF:000026">
    <property type="entry name" value="Heat shock 70-related protein 1, mitochondrial"/>
    <property type="match status" value="1"/>
</dbReference>
<dbReference type="FunFam" id="3.30.30.30:FF:000003">
    <property type="entry name" value="Heat shock protein 9"/>
    <property type="match status" value="1"/>
</dbReference>
<dbReference type="FunFam" id="3.30.420.40:FF:000004">
    <property type="entry name" value="Molecular chaperone DnaK"/>
    <property type="match status" value="1"/>
</dbReference>
<dbReference type="FunFam" id="3.90.640.10:FF:000003">
    <property type="entry name" value="Molecular chaperone DnaK"/>
    <property type="match status" value="1"/>
</dbReference>
<dbReference type="Gene3D" id="1.20.1270.10">
    <property type="match status" value="1"/>
</dbReference>
<dbReference type="Gene3D" id="3.30.30.30">
    <property type="match status" value="1"/>
</dbReference>
<dbReference type="Gene3D" id="3.30.420.40">
    <property type="match status" value="2"/>
</dbReference>
<dbReference type="Gene3D" id="3.90.640.10">
    <property type="entry name" value="Actin, Chain A, domain 4"/>
    <property type="match status" value="1"/>
</dbReference>
<dbReference type="Gene3D" id="2.60.34.10">
    <property type="entry name" value="Substrate Binding Domain Of DNAk, Chain A, domain 1"/>
    <property type="match status" value="1"/>
</dbReference>
<dbReference type="HAMAP" id="MF_00332">
    <property type="entry name" value="DnaK"/>
    <property type="match status" value="1"/>
</dbReference>
<dbReference type="InterPro" id="IPR043129">
    <property type="entry name" value="ATPase_NBD"/>
</dbReference>
<dbReference type="InterPro" id="IPR012725">
    <property type="entry name" value="Chaperone_DnaK"/>
</dbReference>
<dbReference type="InterPro" id="IPR018181">
    <property type="entry name" value="Heat_shock_70_CS"/>
</dbReference>
<dbReference type="InterPro" id="IPR029048">
    <property type="entry name" value="HSP70_C_sf"/>
</dbReference>
<dbReference type="InterPro" id="IPR029047">
    <property type="entry name" value="HSP70_peptide-bd_sf"/>
</dbReference>
<dbReference type="InterPro" id="IPR013126">
    <property type="entry name" value="Hsp_70_fam"/>
</dbReference>
<dbReference type="NCBIfam" id="NF001413">
    <property type="entry name" value="PRK00290.1"/>
    <property type="match status" value="1"/>
</dbReference>
<dbReference type="NCBIfam" id="TIGR02350">
    <property type="entry name" value="prok_dnaK"/>
    <property type="match status" value="1"/>
</dbReference>
<dbReference type="PANTHER" id="PTHR19375">
    <property type="entry name" value="HEAT SHOCK PROTEIN 70KDA"/>
    <property type="match status" value="1"/>
</dbReference>
<dbReference type="Pfam" id="PF00012">
    <property type="entry name" value="HSP70"/>
    <property type="match status" value="1"/>
</dbReference>
<dbReference type="PRINTS" id="PR00301">
    <property type="entry name" value="HEATSHOCK70"/>
</dbReference>
<dbReference type="SUPFAM" id="SSF53067">
    <property type="entry name" value="Actin-like ATPase domain"/>
    <property type="match status" value="2"/>
</dbReference>
<dbReference type="SUPFAM" id="SSF100920">
    <property type="entry name" value="Heat shock protein 70kD (HSP70), peptide-binding domain"/>
    <property type="match status" value="1"/>
</dbReference>
<dbReference type="PROSITE" id="PS00297">
    <property type="entry name" value="HSP70_1"/>
    <property type="match status" value="1"/>
</dbReference>
<dbReference type="PROSITE" id="PS00329">
    <property type="entry name" value="HSP70_2"/>
    <property type="match status" value="1"/>
</dbReference>
<dbReference type="PROSITE" id="PS01036">
    <property type="entry name" value="HSP70_3"/>
    <property type="match status" value="1"/>
</dbReference>
<keyword id="KW-0067">ATP-binding</keyword>
<keyword id="KW-0235">DNA replication</keyword>
<keyword id="KW-0419">Kinetoplast</keyword>
<keyword id="KW-0496">Mitochondrion</keyword>
<keyword id="KW-0547">Nucleotide-binding</keyword>
<keyword id="KW-0346">Stress response</keyword>
<keyword id="KW-0809">Transit peptide</keyword>
<name>HSP71_TRYCR</name>
<evidence type="ECO:0000255" key="1"/>
<evidence type="ECO:0000256" key="2">
    <source>
        <dbReference type="SAM" id="MobiDB-lite"/>
    </source>
</evidence>
<evidence type="ECO:0000305" key="3"/>
<accession>P20583</accession>
<comment type="function">
    <text>May participate in eukaryotic mitochondrial DNA replication.</text>
</comment>
<comment type="subcellular location">
    <subcellularLocation>
        <location>Mitochondrion matrix</location>
        <location>Kinetoplast</location>
    </subcellularLocation>
    <text>Associated with kinetoplast DNA in the mitochondrion, in the region where kdna replication occurs.</text>
</comment>
<comment type="similarity">
    <text evidence="3">Belongs to the heat shock protein 70 family.</text>
</comment>
<gene>
    <name type="primary">MTP70</name>
</gene>
<feature type="transit peptide" description="Mitochondrion" evidence="1">
    <location>
        <begin position="1"/>
        <end position="23" status="uncertain"/>
    </location>
</feature>
<feature type="chain" id="PRO_0000013545" description="Heat shock 70 kDa protein, mitochondrial">
    <location>
        <begin position="24" status="uncertain"/>
        <end position="656"/>
    </location>
</feature>
<feature type="region of interest" description="Disordered" evidence="2">
    <location>
        <begin position="624"/>
        <end position="656"/>
    </location>
</feature>
<feature type="compositionally biased region" description="Low complexity" evidence="2">
    <location>
        <begin position="626"/>
        <end position="656"/>
    </location>
</feature>
<sequence>MFARRLRGAGSLAAASLARWQSSKVTGDVIGIDLGTTYSCVAVMEGDKPRVLENTEGFRATPSVVAFKGQEKLVGLAAKRQAVTNPQSTFFAVKRLIGRRFEDSNIQHDIKNVPYKIGRSSNGDAWVQDANGKQYSPSQVGAFVLEKMKETAENFLGRKVSNAVVTCPAYFNGPQRQATKDAGTIAGLNVIRVVNGPTAAALAYGLDKTKDSMIAVYDLGGGTFDISVLEIAGGVFEVKATNGDTHLGGEDFDLCLSDYILTEFKKSTGIDLSNERMALQRIREAAEKAKCELSTTMETEVNLPFITANQDGAQHVQMTVSRSKFESLAEKLVQRSLGPCKQCIKDAAVDLKEISEVVLVGGMTRMPKVIEAVKQFFGRDPFRGVNPDEAVALGGATLGGVLRRDVKGLVLLDVTPLSLGVETLGGVFTRMIPKNTTIPTKKSQTFFSTAAFNQTQVGIKVFQGEREMAADNQMMGQFDLVGIPPAPRGVPQIEVTFDIEPNGICHVTAKDKATGKTQNITITASGGLSKEQIERMIRDSESHAESDRLKRELVEVRNNAETQANTAERQLTEWKYVSDAEKENVRTLLRACRKSMENPNVTKDELSAATDKLQKAVMECGRTEYQQAAAGNSSSSSGNTDSSQGEQQQQGDQQKQ</sequence>